<organism>
    <name type="scientific">Methanobacterium formicicum</name>
    <dbReference type="NCBI Taxonomy" id="2162"/>
    <lineage>
        <taxon>Archaea</taxon>
        <taxon>Methanobacteriati</taxon>
        <taxon>Methanobacteriota</taxon>
        <taxon>Methanomada group</taxon>
        <taxon>Methanobacteria</taxon>
        <taxon>Methanobacteriales</taxon>
        <taxon>Methanobacteriaceae</taxon>
        <taxon>Methanobacterium</taxon>
    </lineage>
</organism>
<gene>
    <name evidence="8" type="primary">fdhB</name>
</gene>
<evidence type="ECO:0000255" key="1">
    <source>
        <dbReference type="PROSITE-ProRule" id="PRU00711"/>
    </source>
</evidence>
<evidence type="ECO:0000269" key="2">
    <source>
    </source>
</evidence>
<evidence type="ECO:0000269" key="3">
    <source>
    </source>
</evidence>
<evidence type="ECO:0000269" key="4">
    <source>
    </source>
</evidence>
<evidence type="ECO:0000269" key="5">
    <source>
    </source>
</evidence>
<evidence type="ECO:0000269" key="6">
    <source>
    </source>
</evidence>
<evidence type="ECO:0000269" key="7">
    <source>
    </source>
</evidence>
<evidence type="ECO:0000303" key="8">
    <source>
    </source>
</evidence>
<evidence type="ECO:0000305" key="9"/>
<sequence length="399" mass="43922">MINTNDMFYAKSSDAEIAEAGEYGGAVTTLLKFLLKEGIVDAVLAVDSSADLYDVVPILIEDPEDVVKAAGSLHFGTLNLAKVVTRYLDGAQDMKIAVTVKPCDAMTMVELMKREKVNADNVIMVGLNCGGTMPPVKGRQMMEEFYEVDPDSVVKEEIAKGKLIVETEDGTEKEIPIDELEDEGFGRRTNCRRCEVNIPRMADLACGNWGVIGPLAGKATFIEVCSPKGAEVLEKAKEAGVIDLEDPIPKGIEIREKIDGAMVKLADKWQGNDWEDKAGREIFSVLTEYMDDFSRCLKCYGCREACPICYCEDCCLEANNGPDWLSKGEIPPSPMFHLERMLHMVESCTNCGQCEEVCPGEIPLAKIWHEVNAKMKDTFGYVKGTGDEKPPIAYFPVGK</sequence>
<accession>P06130</accession>
<feature type="chain" id="PRO_0000159222" description="F420-dependent formate dehydrogenase subunit beta">
    <location>
        <begin position="1"/>
        <end position="399"/>
    </location>
</feature>
<feature type="domain" description="4Fe-4S ferredoxin-type 1" evidence="1">
    <location>
        <begin position="287"/>
        <end position="307"/>
    </location>
</feature>
<feature type="domain" description="4Fe-4S ferredoxin-type 2" evidence="1">
    <location>
        <begin position="339"/>
        <end position="367"/>
    </location>
</feature>
<feature type="binding site" evidence="1">
    <location>
        <position position="296"/>
    </location>
    <ligand>
        <name>[4Fe-4S] cluster</name>
        <dbReference type="ChEBI" id="CHEBI:49883"/>
        <label>1</label>
    </ligand>
</feature>
<feature type="binding site" evidence="1">
    <location>
        <position position="299"/>
    </location>
    <ligand>
        <name>[4Fe-4S] cluster</name>
        <dbReference type="ChEBI" id="CHEBI:49883"/>
        <label>1</label>
    </ligand>
</feature>
<feature type="binding site" evidence="1">
    <location>
        <position position="302"/>
    </location>
    <ligand>
        <name>[4Fe-4S] cluster</name>
        <dbReference type="ChEBI" id="CHEBI:49883"/>
        <label>1</label>
    </ligand>
</feature>
<feature type="binding site" evidence="1">
    <location>
        <position position="306"/>
    </location>
    <ligand>
        <name>[4Fe-4S] cluster</name>
        <dbReference type="ChEBI" id="CHEBI:49883"/>
        <label>2</label>
    </ligand>
</feature>
<feature type="binding site" evidence="1">
    <location>
        <position position="348"/>
    </location>
    <ligand>
        <name>[4Fe-4S] cluster</name>
        <dbReference type="ChEBI" id="CHEBI:49883"/>
        <label>2</label>
    </ligand>
</feature>
<feature type="binding site" evidence="1">
    <location>
        <position position="351"/>
    </location>
    <ligand>
        <name>[4Fe-4S] cluster</name>
        <dbReference type="ChEBI" id="CHEBI:49883"/>
        <label>2</label>
    </ligand>
</feature>
<feature type="binding site" evidence="1">
    <location>
        <position position="354"/>
    </location>
    <ligand>
        <name>[4Fe-4S] cluster</name>
        <dbReference type="ChEBI" id="CHEBI:49883"/>
        <label>2</label>
    </ligand>
</feature>
<feature type="binding site" evidence="1">
    <location>
        <position position="358"/>
    </location>
    <ligand>
        <name>[4Fe-4S] cluster</name>
        <dbReference type="ChEBI" id="CHEBI:49883"/>
        <label>1</label>
    </ligand>
</feature>
<reference key="1">
    <citation type="journal article" date="1986" name="J. Biol. Chem.">
        <title>Cloning, expression, and nucleotide sequence of the formate dehydrogenase genes from Methanobacterium formicicum.</title>
        <authorList>
            <person name="Shuber A.P."/>
            <person name="Orr E.C."/>
            <person name="Recny M.A."/>
            <person name="Schendel P.F."/>
            <person name="May H.D."/>
            <person name="Schauer N.L."/>
            <person name="Ferry J.G."/>
        </authorList>
    </citation>
    <scope>NUCLEOTIDE SEQUENCE [GENOMIC DNA]</scope>
    <scope>PROTEIN SEQUENCE OF 1-22</scope>
    <scope>SUBUNIT</scope>
    <source>
        <strain>JF-1</strain>
    </source>
</reference>
<reference key="2">
    <citation type="journal article" date="1982" name="J. Bacteriol.">
        <title>Properties of formate dehydrogenase in Methanobacterium formicicum.</title>
        <authorList>
            <person name="Schauer N.L."/>
            <person name="Ferry J.G."/>
        </authorList>
    </citation>
    <scope>FUNCTION</scope>
    <scope>CATALYTIC ACTIVITY</scope>
    <scope>ACTIVITY REGULATION</scope>
    <scope>BIOPHYSICOCHEMICAL PROPERTIES</scope>
    <source>
        <strain>JF-1</strain>
    </source>
</reference>
<reference key="3">
    <citation type="journal article" date="1982" name="J. Bacteriol.">
        <authorList>
            <person name="Schauer N.L."/>
            <person name="Ferry J.G."/>
        </authorList>
    </citation>
    <scope>ERRATUM OF PUBMED:7061389</scope>
</reference>
<reference key="4">
    <citation type="journal article" date="1983" name="J. Bacteriol.">
        <title>FAD requirement for the reduction of coenzyme F420 by formate dehydrogenase from Methanobacterium formicicum.</title>
        <authorList>
            <person name="Schauer N.L."/>
            <person name="Ferry J.G."/>
        </authorList>
    </citation>
    <scope>FUNCTION</scope>
    <scope>CATALYTIC ACTIVITY</scope>
    <scope>COFACTOR</scope>
    <scope>ACTIVITY REGULATION</scope>
</reference>
<reference key="5">
    <citation type="journal article" date="1986" name="Biochemistry">
        <title>Mechanistic studies of the coenzyme F420 reducing formate dehydrogenase from Methanobacterium formicicum.</title>
        <authorList>
            <person name="Schauer N.L."/>
            <person name="Ferry J.G."/>
            <person name="Honek J.F."/>
            <person name="Orme-Johnson W.H."/>
            <person name="Walsh C."/>
        </authorList>
    </citation>
    <scope>FUNCTION</scope>
    <scope>CATALYTIC ACTIVITY</scope>
    <scope>BIOPHYSICOCHEMICAL PROPERTIES</scope>
    <scope>COFACTOR</scope>
</reference>
<reference key="6">
    <citation type="journal article" date="1986" name="J. Bacteriol.">
        <title>Composition of the coenzyme F420-dependent formate dehydrogenase from Methanobacterium formicicum.</title>
        <authorList>
            <person name="Schauer N.L."/>
            <person name="Ferry J.G."/>
        </authorList>
    </citation>
    <scope>FUNCTION</scope>
    <scope>CATALYTIC ACTIVITY</scope>
    <scope>COFACTOR</scope>
    <scope>ACTIVITY REGULATION</scope>
    <scope>SUBUNIT</scope>
    <source>
        <strain>JF-1</strain>
    </source>
</reference>
<reference key="7">
    <citation type="journal article" date="1989" name="J. Bacteriol.">
        <title>Reconstitution and properties of a coenzyme F420-mediated formate hydrogenlyase system in Methanobacterium formicicum.</title>
        <authorList>
            <person name="Baron S.F."/>
            <person name="Ferry J.G."/>
        </authorList>
    </citation>
    <scope>FUNCTION</scope>
    <scope>CATALYTIC ACTIVITY</scope>
    <scope>COFACTOR</scope>
</reference>
<reference key="8">
    <citation type="journal article" date="1989" name="J. Bacteriol.">
        <authorList>
            <person name="Baron S.F."/>
            <person name="Ferry J.G."/>
        </authorList>
    </citation>
    <scope>ERRATUM OF PUBMED:2661536</scope>
</reference>
<keyword id="KW-0004">4Fe-4S</keyword>
<keyword id="KW-0903">Direct protein sequencing</keyword>
<keyword id="KW-0249">Electron transport</keyword>
<keyword id="KW-0274">FAD</keyword>
<keyword id="KW-0285">Flavoprotein</keyword>
<keyword id="KW-0408">Iron</keyword>
<keyword id="KW-0411">Iron-sulfur</keyword>
<keyword id="KW-0479">Metal-binding</keyword>
<keyword id="KW-0560">Oxidoreductase</keyword>
<keyword id="KW-0677">Repeat</keyword>
<keyword id="KW-0813">Transport</keyword>
<keyword id="KW-0862">Zinc</keyword>
<dbReference type="EC" id="1.17.98.3" evidence="2 4 5 6 7"/>
<dbReference type="EMBL" id="J02581">
    <property type="protein sequence ID" value="AAA72183.1"/>
    <property type="molecule type" value="Genomic_DNA"/>
</dbReference>
<dbReference type="PIR" id="B24698">
    <property type="entry name" value="B24698"/>
</dbReference>
<dbReference type="RefSeq" id="WP_023991259.1">
    <property type="nucleotide sequence ID" value="NZ_LN734822.1"/>
</dbReference>
<dbReference type="SMR" id="P06130"/>
<dbReference type="STRING" id="2162.BRM9_0167"/>
<dbReference type="OrthoDB" id="35334at2157"/>
<dbReference type="SABIO-RK" id="P06130"/>
<dbReference type="GO" id="GO:0051539">
    <property type="term" value="F:4 iron, 4 sulfur cluster binding"/>
    <property type="evidence" value="ECO:0007669"/>
    <property type="project" value="UniProtKB-KW"/>
</dbReference>
<dbReference type="GO" id="GO:0043794">
    <property type="term" value="F:formate dehydrogenase (coenzyme F420) activity"/>
    <property type="evidence" value="ECO:0000314"/>
    <property type="project" value="MENGO"/>
</dbReference>
<dbReference type="GO" id="GO:0008863">
    <property type="term" value="F:formate dehydrogenase (NAD+) activity"/>
    <property type="evidence" value="ECO:0007669"/>
    <property type="project" value="UniProtKB-EC"/>
</dbReference>
<dbReference type="GO" id="GO:0046872">
    <property type="term" value="F:metal ion binding"/>
    <property type="evidence" value="ECO:0007669"/>
    <property type="project" value="UniProtKB-KW"/>
</dbReference>
<dbReference type="GO" id="GO:0052592">
    <property type="term" value="F:oxidoreductase activity, acting on CH or CH2 groups, with an iron-sulfur protein as acceptor"/>
    <property type="evidence" value="ECO:0007669"/>
    <property type="project" value="TreeGrafter"/>
</dbReference>
<dbReference type="FunFam" id="1.10.1060.10:FF:000031">
    <property type="entry name" value="Formate dehydrogenase subunit beta"/>
    <property type="match status" value="1"/>
</dbReference>
<dbReference type="Gene3D" id="3.10.450.750">
    <property type="match status" value="1"/>
</dbReference>
<dbReference type="Gene3D" id="1.10.1060.10">
    <property type="entry name" value="Alpha-helical ferredoxin"/>
    <property type="match status" value="1"/>
</dbReference>
<dbReference type="InterPro" id="IPR017896">
    <property type="entry name" value="4Fe4S_Fe-S-bd"/>
</dbReference>
<dbReference type="InterPro" id="IPR017900">
    <property type="entry name" value="4Fe4S_Fe_S_CS"/>
</dbReference>
<dbReference type="InterPro" id="IPR007516">
    <property type="entry name" value="Co_F420_Hydgase/DH_bsu_N"/>
</dbReference>
<dbReference type="InterPro" id="IPR045220">
    <property type="entry name" value="FRHB/FDHB/HCAR-like"/>
</dbReference>
<dbReference type="InterPro" id="IPR007525">
    <property type="entry name" value="FrhB_FdhB_C"/>
</dbReference>
<dbReference type="InterPro" id="IPR009051">
    <property type="entry name" value="Helical_ferredxn"/>
</dbReference>
<dbReference type="PANTHER" id="PTHR31332">
    <property type="entry name" value="7-HYDROXYMETHYL CHLOROPHYLL A REDUCTASE, CHLOROPLASTIC"/>
    <property type="match status" value="1"/>
</dbReference>
<dbReference type="PANTHER" id="PTHR31332:SF6">
    <property type="entry name" value="FORMATE DEHYDROGENASE SUBUNIT BETA"/>
    <property type="match status" value="1"/>
</dbReference>
<dbReference type="Pfam" id="PF04432">
    <property type="entry name" value="FrhB_FdhB_C"/>
    <property type="match status" value="1"/>
</dbReference>
<dbReference type="Pfam" id="PF04422">
    <property type="entry name" value="FrhB_FdhB_N"/>
    <property type="match status" value="1"/>
</dbReference>
<dbReference type="SUPFAM" id="SSF46548">
    <property type="entry name" value="alpha-helical ferredoxin"/>
    <property type="match status" value="1"/>
</dbReference>
<dbReference type="PROSITE" id="PS00198">
    <property type="entry name" value="4FE4S_FER_1"/>
    <property type="match status" value="2"/>
</dbReference>
<dbReference type="PROSITE" id="PS51379">
    <property type="entry name" value="4FE4S_FER_2"/>
    <property type="match status" value="2"/>
</dbReference>
<name>FDHB_METFO</name>
<protein>
    <recommendedName>
        <fullName evidence="9">F420-dependent formate dehydrogenase subunit beta</fullName>
        <ecNumber evidence="2 4 5 6 7">1.17.98.3</ecNumber>
    </recommendedName>
</protein>
<proteinExistence type="evidence at protein level"/>
<comment type="function">
    <text evidence="2 4 5 6 7">Catalyzes the oxidation of formate to carbon dioxide, with coenzyme F420 as the electron acceptor (PubMed:2661536, PubMed:3801411, PubMed:3944055, PubMed:6874636, PubMed:7061389). In vitro can also use methyl viologen, 7,8-didemethyl-8-hydroxy-5-deazariboflavin (or FO, a hydrolytic derivative of coenzyme F420), FMN and FAD as electron acceptors, but not NAD(+) or NADP(+) (PubMed:2661536, PubMed:3944055, PubMed:6874636, PubMed:7061389).</text>
</comment>
<comment type="catalytic activity">
    <reaction evidence="2 4 5 6 7">
        <text>oxidized coenzyme F420-(gamma-L-Glu)(n) + formate + 2 H(+) = reduced coenzyme F420-(gamma-L-Glu)(n) + CO2</text>
        <dbReference type="Rhea" id="RHEA:42764"/>
        <dbReference type="Rhea" id="RHEA-COMP:12939"/>
        <dbReference type="Rhea" id="RHEA-COMP:14378"/>
        <dbReference type="ChEBI" id="CHEBI:15378"/>
        <dbReference type="ChEBI" id="CHEBI:15740"/>
        <dbReference type="ChEBI" id="CHEBI:16526"/>
        <dbReference type="ChEBI" id="CHEBI:133980"/>
        <dbReference type="ChEBI" id="CHEBI:139511"/>
        <dbReference type="EC" id="1.17.98.3"/>
    </reaction>
</comment>
<comment type="cofactor">
    <cofactor evidence="1">
        <name>[4Fe-4S] cluster</name>
        <dbReference type="ChEBI" id="CHEBI:49883"/>
    </cofactor>
    <text evidence="1">Binds 2 [4Fe-4S] clusters.</text>
</comment>
<comment type="cofactor">
    <cofactor evidence="2 4 5 6">
        <name>FAD</name>
        <dbReference type="ChEBI" id="CHEBI:57692"/>
    </cofactor>
</comment>
<comment type="cofactor">
    <cofactor evidence="5">
        <name>Zn(2+)</name>
        <dbReference type="ChEBI" id="CHEBI:29105"/>
    </cofactor>
</comment>
<comment type="activity regulation">
    <text evidence="5 6 7">Is extremely sensitive to oxygen (PubMed:7061389). Contains a FAD that is required for coenzyme F420-dependent activity but not for methyl viologen-dependent activity (PubMed:3944055, PubMed:6874636). Preincubation of the FAD-depleted enzyme with FAD restores coenzyme F420-dependent activity (PubMed:3944055, PubMed:6874636). Neither FMN nor FADH2 can replace FAD (PubMed:3944055, PubMed:6874636). Strongly inhibited by cyanide, azide, alpha,alpha-dipyridyl and 1,10-phenanthroline (PubMed:7061389).</text>
</comment>
<comment type="biophysicochemical properties">
    <kinetics>
        <KM evidence="7">6 uM for coenzyme F420</KM>
        <KM evidence="7">63 uM for 7,8-didemethyl-8-hydroxy-5-deazariboflavin</KM>
        <KM evidence="7">44 uM for FMN</KM>
        <KM evidence="7">98 uM for FAD</KM>
        <KM evidence="4">12 uM for protioformate</KM>
        <KM evidence="4">9 uM for deuterioformate</KM>
        <Vmax evidence="7">17.4 umol/min/mg enzyme (with coenzyme F420 as electron acceptor)</Vmax>
        <Vmax evidence="7">18.8 umol/min/mg enzyme (with 7,8-didemethyl-8-hydroxy-5-deazariboflavin as electron acceptor)</Vmax>
        <Vmax evidence="7">19.5 umol/min/mg enzyme (with FMN as electron acceptor)</Vmax>
        <Vmax evidence="7">26.6 umol/min/mg enzyme (with FAD as electron acceptor)</Vmax>
    </kinetics>
    <phDependence>
        <text evidence="7">Optimum pH is 7.9 (when assayed with coenzyme F420).</text>
    </phDependence>
    <temperatureDependence>
        <text evidence="7">Optimum temperature is 55 degrees Celsius.</text>
    </temperatureDependence>
</comment>
<comment type="subunit">
    <text evidence="3 5">Dimer of an alpha (FdhA) and a beta (FdhB) subunit.</text>
</comment>
<comment type="similarity">
    <text evidence="9">Belongs to the FrhB family.</text>
</comment>